<gene>
    <name evidence="1" type="primary">kdpA1</name>
    <name type="ordered locus">SA1881</name>
</gene>
<organism>
    <name type="scientific">Staphylococcus aureus (strain N315)</name>
    <dbReference type="NCBI Taxonomy" id="158879"/>
    <lineage>
        <taxon>Bacteria</taxon>
        <taxon>Bacillati</taxon>
        <taxon>Bacillota</taxon>
        <taxon>Bacilli</taxon>
        <taxon>Bacillales</taxon>
        <taxon>Staphylococcaceae</taxon>
        <taxon>Staphylococcus</taxon>
    </lineage>
</organism>
<keyword id="KW-1003">Cell membrane</keyword>
<keyword id="KW-0406">Ion transport</keyword>
<keyword id="KW-0472">Membrane</keyword>
<keyword id="KW-0630">Potassium</keyword>
<keyword id="KW-0633">Potassium transport</keyword>
<keyword id="KW-0812">Transmembrane</keyword>
<keyword id="KW-1133">Transmembrane helix</keyword>
<keyword id="KW-0813">Transport</keyword>
<feature type="chain" id="PRO_0000166527" description="Potassium-transporting ATPase potassium-binding subunit 1">
    <location>
        <begin position="1"/>
        <end position="558"/>
    </location>
</feature>
<feature type="transmembrane region" description="Helical" evidence="1">
    <location>
        <begin position="1"/>
        <end position="21"/>
    </location>
</feature>
<feature type="transmembrane region" description="Helical" evidence="1">
    <location>
        <begin position="66"/>
        <end position="86"/>
    </location>
</feature>
<feature type="transmembrane region" description="Helical" evidence="1">
    <location>
        <begin position="127"/>
        <end position="147"/>
    </location>
</feature>
<feature type="transmembrane region" description="Helical" evidence="1">
    <location>
        <begin position="166"/>
        <end position="186"/>
    </location>
</feature>
<feature type="transmembrane region" description="Helical" evidence="1">
    <location>
        <begin position="245"/>
        <end position="265"/>
    </location>
</feature>
<feature type="transmembrane region" description="Helical" evidence="1">
    <location>
        <begin position="281"/>
        <end position="301"/>
    </location>
</feature>
<feature type="transmembrane region" description="Helical" evidence="1">
    <location>
        <begin position="327"/>
        <end position="347"/>
    </location>
</feature>
<feature type="transmembrane region" description="Helical" evidence="1">
    <location>
        <begin position="354"/>
        <end position="374"/>
    </location>
</feature>
<feature type="transmembrane region" description="Helical" evidence="1">
    <location>
        <begin position="377"/>
        <end position="397"/>
    </location>
</feature>
<feature type="transmembrane region" description="Helical" evidence="1">
    <location>
        <begin position="416"/>
        <end position="436"/>
    </location>
</feature>
<feature type="transmembrane region" description="Helical" evidence="1">
    <location>
        <begin position="482"/>
        <end position="502"/>
    </location>
</feature>
<feature type="transmembrane region" description="Helical" evidence="1">
    <location>
        <begin position="531"/>
        <end position="551"/>
    </location>
</feature>
<name>KDPA1_STAAN</name>
<sequence length="558" mass="62025">MEIILFLTMMVMITYVFSGYLYRVALVQSSRVDLIFTRFENMCFKIIGTDLEHMSAKTYVKHFLAFNGFMGFITFVLLIVQQWLFLNPNHILNQSIDLAFNTAISFLTNSNLQHYNGESDVTYLTQMIVMTYLMFTSSASGYAVCIAMLRRLTGLTNIIGNFYQDIVRFIVRVLLPLSCLISILLMTQGVPQTLHANLMIRTLSGHIQHIAFGPIASLESIKHLGTNGGGFLAGNSATPFENPNIWSNFIEMGSMMLLPMSMLFLFGRMLSRHGKRVHRHALILFVAMFFIFIAILTLTMWSEYRGNPILANLGIYGPNMEGKEVRFGAGLSALFTVITTAFTTGSVNNMHDSLTPIGGLGPMVLMMLNVVFGGEGVGLMNLLIFVLLTVFICSLMVGKTPEYLNMPIGAREMKCIVLVFLIHPILILVFSALAFMIPGASESITNPSFHGISQVMYEMTSAAANNGSGFEGLKDDTTFWNISTGIIMLLSRYIPIILQLMIASSLVNKKSYHQDKYTIAIDKPYFGVSLIVFIVLLSGLTFIPVLLLGPIGEFLTLK</sequence>
<dbReference type="EMBL" id="BA000018">
    <property type="protein sequence ID" value="BAB43164.1"/>
    <property type="molecule type" value="Genomic_DNA"/>
</dbReference>
<dbReference type="PIR" id="C90000">
    <property type="entry name" value="C90000"/>
</dbReference>
<dbReference type="SMR" id="Q7A4G4"/>
<dbReference type="EnsemblBacteria" id="BAB43164">
    <property type="protein sequence ID" value="BAB43164"/>
    <property type="gene ID" value="BAB43164"/>
</dbReference>
<dbReference type="KEGG" id="sau:SA1881"/>
<dbReference type="HOGENOM" id="CLU_018614_3_0_9"/>
<dbReference type="GO" id="GO:0005886">
    <property type="term" value="C:plasma membrane"/>
    <property type="evidence" value="ECO:0007669"/>
    <property type="project" value="UniProtKB-SubCell"/>
</dbReference>
<dbReference type="GO" id="GO:0008556">
    <property type="term" value="F:P-type potassium transmembrane transporter activity"/>
    <property type="evidence" value="ECO:0007669"/>
    <property type="project" value="InterPro"/>
</dbReference>
<dbReference type="GO" id="GO:0030955">
    <property type="term" value="F:potassium ion binding"/>
    <property type="evidence" value="ECO:0007669"/>
    <property type="project" value="UniProtKB-UniRule"/>
</dbReference>
<dbReference type="HAMAP" id="MF_00275">
    <property type="entry name" value="KdpA"/>
    <property type="match status" value="1"/>
</dbReference>
<dbReference type="InterPro" id="IPR004623">
    <property type="entry name" value="KdpA"/>
</dbReference>
<dbReference type="NCBIfam" id="TIGR00680">
    <property type="entry name" value="kdpA"/>
    <property type="match status" value="1"/>
</dbReference>
<dbReference type="PANTHER" id="PTHR30607">
    <property type="entry name" value="POTASSIUM-TRANSPORTING ATPASE A CHAIN"/>
    <property type="match status" value="1"/>
</dbReference>
<dbReference type="PANTHER" id="PTHR30607:SF2">
    <property type="entry name" value="POTASSIUM-TRANSPORTING ATPASE POTASSIUM-BINDING SUBUNIT"/>
    <property type="match status" value="1"/>
</dbReference>
<dbReference type="Pfam" id="PF03814">
    <property type="entry name" value="KdpA"/>
    <property type="match status" value="1"/>
</dbReference>
<dbReference type="PIRSF" id="PIRSF001294">
    <property type="entry name" value="K_ATPaseA"/>
    <property type="match status" value="1"/>
</dbReference>
<evidence type="ECO:0000255" key="1">
    <source>
        <dbReference type="HAMAP-Rule" id="MF_00275"/>
    </source>
</evidence>
<protein>
    <recommendedName>
        <fullName evidence="1">Potassium-transporting ATPase potassium-binding subunit 1</fullName>
    </recommendedName>
    <alternativeName>
        <fullName evidence="1">ATP phosphohydrolase [potassium-transporting] A chain 1</fullName>
    </alternativeName>
    <alternativeName>
        <fullName evidence="1">Potassium-binding and translocating subunit A 1</fullName>
    </alternativeName>
    <alternativeName>
        <fullName evidence="1">Potassium-translocating ATPase A chain 1</fullName>
    </alternativeName>
</protein>
<comment type="function">
    <text evidence="1">Part of the high-affinity ATP-driven potassium transport (or Kdp) system, which catalyzes the hydrolysis of ATP coupled with the electrogenic transport of potassium into the cytoplasm. This subunit binds the extracellular potassium ions and delivers the ions to the membrane domain of KdpB through an intramembrane tunnel.</text>
</comment>
<comment type="subunit">
    <text evidence="1">The system is composed of three essential subunits: KdpA, KdpB and KdpC.</text>
</comment>
<comment type="subcellular location">
    <subcellularLocation>
        <location evidence="1">Cell membrane</location>
        <topology evidence="1">Multi-pass membrane protein</topology>
    </subcellularLocation>
</comment>
<comment type="similarity">
    <text evidence="1">Belongs to the KdpA family.</text>
</comment>
<reference key="1">
    <citation type="journal article" date="2001" name="Lancet">
        <title>Whole genome sequencing of meticillin-resistant Staphylococcus aureus.</title>
        <authorList>
            <person name="Kuroda M."/>
            <person name="Ohta T."/>
            <person name="Uchiyama I."/>
            <person name="Baba T."/>
            <person name="Yuzawa H."/>
            <person name="Kobayashi I."/>
            <person name="Cui L."/>
            <person name="Oguchi A."/>
            <person name="Aoki K."/>
            <person name="Nagai Y."/>
            <person name="Lian J.-Q."/>
            <person name="Ito T."/>
            <person name="Kanamori M."/>
            <person name="Matsumaru H."/>
            <person name="Maruyama A."/>
            <person name="Murakami H."/>
            <person name="Hosoyama A."/>
            <person name="Mizutani-Ui Y."/>
            <person name="Takahashi N.K."/>
            <person name="Sawano T."/>
            <person name="Inoue R."/>
            <person name="Kaito C."/>
            <person name="Sekimizu K."/>
            <person name="Hirakawa H."/>
            <person name="Kuhara S."/>
            <person name="Goto S."/>
            <person name="Yabuzaki J."/>
            <person name="Kanehisa M."/>
            <person name="Yamashita A."/>
            <person name="Oshima K."/>
            <person name="Furuya K."/>
            <person name="Yoshino C."/>
            <person name="Shiba T."/>
            <person name="Hattori M."/>
            <person name="Ogasawara N."/>
            <person name="Hayashi H."/>
            <person name="Hiramatsu K."/>
        </authorList>
    </citation>
    <scope>NUCLEOTIDE SEQUENCE [LARGE SCALE GENOMIC DNA]</scope>
    <source>
        <strain>N315</strain>
    </source>
</reference>
<proteinExistence type="inferred from homology"/>
<accession>Q7A4G4</accession>